<protein>
    <recommendedName>
        <fullName evidence="1">Queuine tRNA-ribosyltransferase</fullName>
        <ecNumber evidence="1">2.4.2.29</ecNumber>
    </recommendedName>
    <alternativeName>
        <fullName evidence="1">Guanine insertion enzyme</fullName>
    </alternativeName>
    <alternativeName>
        <fullName evidence="1">tRNA-guanine transglycosylase</fullName>
    </alternativeName>
</protein>
<sequence length="369" mass="41004">MQFDLLKTDGVARRGTLTLAHGVIQTPVFMPVGTYGTVKAMTPQSLNDIGAQICLGNTFHLWLRPGLEVIAAHKGLHDFMNWQKPILTDSGGFQVFSLGAMRKITEEGVKFSSPHDGAKLFLTPEISMQIQKVLNSDIVMIFDECTPYPATHEEAAKSMRMSMRWAQRSRDEHNKLENSNALFGIVQGGMHEDLRDESVAGLCDIGFDGMAIGGLSVGEPKEDMARILAHTAPQLPTHKPRYLMGVGTPEDLVYSVSAGIDMFDCVMPTRNARNGHLFTRFGDVKIKNARYKLDTGPLDSSCSCYTCTNFTRAYLHHLFRNGEILGGMLNTIHNLHFYQTIMAEMRTAIEVEHFTEWAAGFARDRSSGQ</sequence>
<reference key="1">
    <citation type="journal article" date="2009" name="BMC Genomics">
        <title>Metabolic analysis of the soil microbe Dechloromonas aromatica str. RCB: indications of a surprisingly complex life-style and cryptic anaerobic pathways for aromatic degradation.</title>
        <authorList>
            <person name="Salinero K.K."/>
            <person name="Keller K."/>
            <person name="Feil W.S."/>
            <person name="Feil H."/>
            <person name="Trong S."/>
            <person name="Di Bartolo G."/>
            <person name="Lapidus A."/>
        </authorList>
    </citation>
    <scope>NUCLEOTIDE SEQUENCE [LARGE SCALE GENOMIC DNA]</scope>
    <source>
        <strain>RCB</strain>
    </source>
</reference>
<name>TGT_DECAR</name>
<keyword id="KW-0328">Glycosyltransferase</keyword>
<keyword id="KW-0479">Metal-binding</keyword>
<keyword id="KW-0671">Queuosine biosynthesis</keyword>
<keyword id="KW-0808">Transferase</keyword>
<keyword id="KW-0819">tRNA processing</keyword>
<keyword id="KW-0862">Zinc</keyword>
<comment type="function">
    <text evidence="1">Catalyzes the base-exchange of a guanine (G) residue with the queuine precursor 7-aminomethyl-7-deazaguanine (PreQ1) at position 34 (anticodon wobble position) in tRNAs with GU(N) anticodons (tRNA-Asp, -Asn, -His and -Tyr). Catalysis occurs through a double-displacement mechanism. The nucleophile active site attacks the C1' of nucleotide 34 to detach the guanine base from the RNA, forming a covalent enzyme-RNA intermediate. The proton acceptor active site deprotonates the incoming PreQ1, allowing a nucleophilic attack on the C1' of the ribose to form the product. After dissociation, two additional enzymatic reactions on the tRNA convert PreQ1 to queuine (Q), resulting in the hypermodified nucleoside queuosine (7-(((4,5-cis-dihydroxy-2-cyclopenten-1-yl)amino)methyl)-7-deazaguanosine).</text>
</comment>
<comment type="catalytic activity">
    <reaction evidence="1">
        <text>7-aminomethyl-7-carbaguanine + guanosine(34) in tRNA = 7-aminomethyl-7-carbaguanosine(34) in tRNA + guanine</text>
        <dbReference type="Rhea" id="RHEA:24104"/>
        <dbReference type="Rhea" id="RHEA-COMP:10341"/>
        <dbReference type="Rhea" id="RHEA-COMP:10342"/>
        <dbReference type="ChEBI" id="CHEBI:16235"/>
        <dbReference type="ChEBI" id="CHEBI:58703"/>
        <dbReference type="ChEBI" id="CHEBI:74269"/>
        <dbReference type="ChEBI" id="CHEBI:82833"/>
        <dbReference type="EC" id="2.4.2.29"/>
    </reaction>
</comment>
<comment type="cofactor">
    <cofactor evidence="1">
        <name>Zn(2+)</name>
        <dbReference type="ChEBI" id="CHEBI:29105"/>
    </cofactor>
    <text evidence="1">Binds 1 zinc ion per subunit.</text>
</comment>
<comment type="pathway">
    <text evidence="1">tRNA modification; tRNA-queuosine biosynthesis.</text>
</comment>
<comment type="subunit">
    <text evidence="1">Homodimer. Within each dimer, one monomer is responsible for RNA recognition and catalysis, while the other monomer binds to the replacement base PreQ1.</text>
</comment>
<comment type="similarity">
    <text evidence="1">Belongs to the queuine tRNA-ribosyltransferase family.</text>
</comment>
<gene>
    <name evidence="1" type="primary">tgt</name>
    <name type="ordered locus">Daro_3278</name>
</gene>
<evidence type="ECO:0000255" key="1">
    <source>
        <dbReference type="HAMAP-Rule" id="MF_00168"/>
    </source>
</evidence>
<accession>Q47AX3</accession>
<dbReference type="EC" id="2.4.2.29" evidence="1"/>
<dbReference type="EMBL" id="CP000089">
    <property type="protein sequence ID" value="AAZ48008.1"/>
    <property type="molecule type" value="Genomic_DNA"/>
</dbReference>
<dbReference type="SMR" id="Q47AX3"/>
<dbReference type="STRING" id="159087.Daro_3278"/>
<dbReference type="KEGG" id="dar:Daro_3278"/>
<dbReference type="eggNOG" id="COG0343">
    <property type="taxonomic scope" value="Bacteria"/>
</dbReference>
<dbReference type="HOGENOM" id="CLU_022060_0_1_4"/>
<dbReference type="OrthoDB" id="9805417at2"/>
<dbReference type="UniPathway" id="UPA00392"/>
<dbReference type="GO" id="GO:0005829">
    <property type="term" value="C:cytosol"/>
    <property type="evidence" value="ECO:0007669"/>
    <property type="project" value="TreeGrafter"/>
</dbReference>
<dbReference type="GO" id="GO:0046872">
    <property type="term" value="F:metal ion binding"/>
    <property type="evidence" value="ECO:0007669"/>
    <property type="project" value="UniProtKB-KW"/>
</dbReference>
<dbReference type="GO" id="GO:0008479">
    <property type="term" value="F:tRNA-guanosine(34) queuine transglycosylase activity"/>
    <property type="evidence" value="ECO:0007669"/>
    <property type="project" value="UniProtKB-UniRule"/>
</dbReference>
<dbReference type="GO" id="GO:0008616">
    <property type="term" value="P:queuosine biosynthetic process"/>
    <property type="evidence" value="ECO:0007669"/>
    <property type="project" value="UniProtKB-UniRule"/>
</dbReference>
<dbReference type="GO" id="GO:0002099">
    <property type="term" value="P:tRNA wobble guanine modification"/>
    <property type="evidence" value="ECO:0007669"/>
    <property type="project" value="TreeGrafter"/>
</dbReference>
<dbReference type="GO" id="GO:0101030">
    <property type="term" value="P:tRNA-guanine transglycosylation"/>
    <property type="evidence" value="ECO:0007669"/>
    <property type="project" value="InterPro"/>
</dbReference>
<dbReference type="FunFam" id="3.20.20.105:FF:000001">
    <property type="entry name" value="Queuine tRNA-ribosyltransferase"/>
    <property type="match status" value="1"/>
</dbReference>
<dbReference type="Gene3D" id="3.20.20.105">
    <property type="entry name" value="Queuine tRNA-ribosyltransferase-like"/>
    <property type="match status" value="1"/>
</dbReference>
<dbReference type="HAMAP" id="MF_00168">
    <property type="entry name" value="Q_tRNA_Tgt"/>
    <property type="match status" value="1"/>
</dbReference>
<dbReference type="InterPro" id="IPR050076">
    <property type="entry name" value="ArchSynthase1/Queuine_TRR"/>
</dbReference>
<dbReference type="InterPro" id="IPR004803">
    <property type="entry name" value="TGT"/>
</dbReference>
<dbReference type="InterPro" id="IPR036511">
    <property type="entry name" value="TGT-like_sf"/>
</dbReference>
<dbReference type="InterPro" id="IPR002616">
    <property type="entry name" value="tRNA_ribo_trans-like"/>
</dbReference>
<dbReference type="NCBIfam" id="TIGR00430">
    <property type="entry name" value="Q_tRNA_tgt"/>
    <property type="match status" value="1"/>
</dbReference>
<dbReference type="NCBIfam" id="TIGR00449">
    <property type="entry name" value="tgt_general"/>
    <property type="match status" value="1"/>
</dbReference>
<dbReference type="PANTHER" id="PTHR46499">
    <property type="entry name" value="QUEUINE TRNA-RIBOSYLTRANSFERASE"/>
    <property type="match status" value="1"/>
</dbReference>
<dbReference type="PANTHER" id="PTHR46499:SF1">
    <property type="entry name" value="QUEUINE TRNA-RIBOSYLTRANSFERASE"/>
    <property type="match status" value="1"/>
</dbReference>
<dbReference type="Pfam" id="PF01702">
    <property type="entry name" value="TGT"/>
    <property type="match status" value="1"/>
</dbReference>
<dbReference type="SUPFAM" id="SSF51713">
    <property type="entry name" value="tRNA-guanine transglycosylase"/>
    <property type="match status" value="1"/>
</dbReference>
<proteinExistence type="inferred from homology"/>
<feature type="chain" id="PRO_1000016785" description="Queuine tRNA-ribosyltransferase">
    <location>
        <begin position="1"/>
        <end position="369"/>
    </location>
</feature>
<feature type="region of interest" description="RNA binding" evidence="1">
    <location>
        <begin position="245"/>
        <end position="251"/>
    </location>
</feature>
<feature type="region of interest" description="RNA binding; important for wobble base 34 recognition" evidence="1">
    <location>
        <begin position="269"/>
        <end position="273"/>
    </location>
</feature>
<feature type="active site" description="Proton acceptor" evidence="1">
    <location>
        <position position="89"/>
    </location>
</feature>
<feature type="active site" description="Nucleophile" evidence="1">
    <location>
        <position position="264"/>
    </location>
</feature>
<feature type="binding site" evidence="1">
    <location>
        <begin position="89"/>
        <end position="93"/>
    </location>
    <ligand>
        <name>substrate</name>
    </ligand>
</feature>
<feature type="binding site" evidence="1">
    <location>
        <position position="143"/>
    </location>
    <ligand>
        <name>substrate</name>
    </ligand>
</feature>
<feature type="binding site" evidence="1">
    <location>
        <position position="187"/>
    </location>
    <ligand>
        <name>substrate</name>
    </ligand>
</feature>
<feature type="binding site" evidence="1">
    <location>
        <position position="214"/>
    </location>
    <ligand>
        <name>substrate</name>
    </ligand>
</feature>
<feature type="binding site" evidence="1">
    <location>
        <position position="302"/>
    </location>
    <ligand>
        <name>Zn(2+)</name>
        <dbReference type="ChEBI" id="CHEBI:29105"/>
    </ligand>
</feature>
<feature type="binding site" evidence="1">
    <location>
        <position position="304"/>
    </location>
    <ligand>
        <name>Zn(2+)</name>
        <dbReference type="ChEBI" id="CHEBI:29105"/>
    </ligand>
</feature>
<feature type="binding site" evidence="1">
    <location>
        <position position="307"/>
    </location>
    <ligand>
        <name>Zn(2+)</name>
        <dbReference type="ChEBI" id="CHEBI:29105"/>
    </ligand>
</feature>
<feature type="binding site" evidence="1">
    <location>
        <position position="333"/>
    </location>
    <ligand>
        <name>Zn(2+)</name>
        <dbReference type="ChEBI" id="CHEBI:29105"/>
    </ligand>
</feature>
<organism>
    <name type="scientific">Dechloromonas aromatica (strain RCB)</name>
    <dbReference type="NCBI Taxonomy" id="159087"/>
    <lineage>
        <taxon>Bacteria</taxon>
        <taxon>Pseudomonadati</taxon>
        <taxon>Pseudomonadota</taxon>
        <taxon>Betaproteobacteria</taxon>
        <taxon>Rhodocyclales</taxon>
        <taxon>Azonexaceae</taxon>
        <taxon>Dechloromonas</taxon>
    </lineage>
</organism>